<reference key="1">
    <citation type="journal article" date="2011" name="PLoS Pathog.">
        <title>Comparative genomics yields insights into niche adaptation of plant vascular wilt pathogens.</title>
        <authorList>
            <person name="Klosterman S.J."/>
            <person name="Subbarao K.V."/>
            <person name="Kang S."/>
            <person name="Veronese P."/>
            <person name="Gold S.E."/>
            <person name="Thomma B.P.H.J."/>
            <person name="Chen Z."/>
            <person name="Henrissat B."/>
            <person name="Lee Y.-H."/>
            <person name="Park J."/>
            <person name="Garcia-Pedrajas M.D."/>
            <person name="Barbara D.J."/>
            <person name="Anchieta A."/>
            <person name="de Jonge R."/>
            <person name="Santhanam P."/>
            <person name="Maruthachalam K."/>
            <person name="Atallah Z."/>
            <person name="Amyotte S.G."/>
            <person name="Paz Z."/>
            <person name="Inderbitzin P."/>
            <person name="Hayes R.J."/>
            <person name="Heiman D.I."/>
            <person name="Young S."/>
            <person name="Zeng Q."/>
            <person name="Engels R."/>
            <person name="Galagan J."/>
            <person name="Cuomo C.A."/>
            <person name="Dobinson K.F."/>
            <person name="Ma L.-J."/>
        </authorList>
    </citation>
    <scope>NUCLEOTIDE SEQUENCE [LARGE SCALE GENOMIC DNA]</scope>
    <source>
        <strain>VaMs.102 / ATCC MYA-4576 / FGSC 10136</strain>
    </source>
</reference>
<name>ENOPH_VERA1</name>
<protein>
    <recommendedName>
        <fullName evidence="1">Enolase-phosphatase E1</fullName>
        <ecNumber evidence="1">3.1.3.77</ecNumber>
    </recommendedName>
    <alternativeName>
        <fullName evidence="1">2,3-diketo-5-methylthio-1-phosphopentane phosphatase</fullName>
    </alternativeName>
</protein>
<accession>C9SUS0</accession>
<dbReference type="EC" id="3.1.3.77" evidence="1"/>
<dbReference type="EMBL" id="DS985226">
    <property type="protein sequence ID" value="EEY22535.1"/>
    <property type="molecule type" value="Genomic_DNA"/>
</dbReference>
<dbReference type="RefSeq" id="XP_003000849.1">
    <property type="nucleotide sequence ID" value="XM_003000803.1"/>
</dbReference>
<dbReference type="SMR" id="C9SUS0"/>
<dbReference type="STRING" id="526221.C9SUS0"/>
<dbReference type="GeneID" id="9534237"/>
<dbReference type="KEGG" id="val:VDBG_08645"/>
<dbReference type="eggNOG" id="KOG2630">
    <property type="taxonomic scope" value="Eukaryota"/>
</dbReference>
<dbReference type="HOGENOM" id="CLU_023273_1_1_1"/>
<dbReference type="OMA" id="LQGMVWE"/>
<dbReference type="OrthoDB" id="272500at2759"/>
<dbReference type="UniPathway" id="UPA00904">
    <property type="reaction ID" value="UER00876"/>
</dbReference>
<dbReference type="UniPathway" id="UPA00904">
    <property type="reaction ID" value="UER00877"/>
</dbReference>
<dbReference type="Proteomes" id="UP000008698">
    <property type="component" value="Unassembled WGS sequence"/>
</dbReference>
<dbReference type="GO" id="GO:0005737">
    <property type="term" value="C:cytoplasm"/>
    <property type="evidence" value="ECO:0007669"/>
    <property type="project" value="UniProtKB-SubCell"/>
</dbReference>
<dbReference type="GO" id="GO:0005634">
    <property type="term" value="C:nucleus"/>
    <property type="evidence" value="ECO:0007669"/>
    <property type="project" value="UniProtKB-SubCell"/>
</dbReference>
<dbReference type="GO" id="GO:0043874">
    <property type="term" value="F:acireductone synthase activity"/>
    <property type="evidence" value="ECO:0007669"/>
    <property type="project" value="UniProtKB-EC"/>
</dbReference>
<dbReference type="GO" id="GO:0000287">
    <property type="term" value="F:magnesium ion binding"/>
    <property type="evidence" value="ECO:0007669"/>
    <property type="project" value="UniProtKB-UniRule"/>
</dbReference>
<dbReference type="GO" id="GO:0019509">
    <property type="term" value="P:L-methionine salvage from methylthioadenosine"/>
    <property type="evidence" value="ECO:0007669"/>
    <property type="project" value="UniProtKB-UniRule"/>
</dbReference>
<dbReference type="CDD" id="cd01629">
    <property type="entry name" value="HAD_EP"/>
    <property type="match status" value="1"/>
</dbReference>
<dbReference type="FunFam" id="1.10.720.60:FF:000007">
    <property type="entry name" value="Enolase-phosphatase E1"/>
    <property type="match status" value="1"/>
</dbReference>
<dbReference type="Gene3D" id="1.10.720.60">
    <property type="match status" value="1"/>
</dbReference>
<dbReference type="Gene3D" id="3.40.50.1000">
    <property type="entry name" value="HAD superfamily/HAD-like"/>
    <property type="match status" value="1"/>
</dbReference>
<dbReference type="HAMAP" id="MF_03117">
    <property type="entry name" value="Salvage_MtnC_euk"/>
    <property type="match status" value="1"/>
</dbReference>
<dbReference type="InterPro" id="IPR023943">
    <property type="entry name" value="Enolase-ppase_E1"/>
</dbReference>
<dbReference type="InterPro" id="IPR027511">
    <property type="entry name" value="ENOPH1_eukaryotes"/>
</dbReference>
<dbReference type="InterPro" id="IPR036412">
    <property type="entry name" value="HAD-like_sf"/>
</dbReference>
<dbReference type="InterPro" id="IPR023214">
    <property type="entry name" value="HAD_sf"/>
</dbReference>
<dbReference type="NCBIfam" id="TIGR01691">
    <property type="entry name" value="enolase-ppase"/>
    <property type="match status" value="1"/>
</dbReference>
<dbReference type="PANTHER" id="PTHR20371">
    <property type="entry name" value="ENOLASE-PHOSPHATASE E1"/>
    <property type="match status" value="1"/>
</dbReference>
<dbReference type="PANTHER" id="PTHR20371:SF1">
    <property type="entry name" value="ENOLASE-PHOSPHATASE E1"/>
    <property type="match status" value="1"/>
</dbReference>
<dbReference type="Pfam" id="PF00702">
    <property type="entry name" value="Hydrolase"/>
    <property type="match status" value="1"/>
</dbReference>
<dbReference type="SFLD" id="SFLDG01133">
    <property type="entry name" value="C1.5.4:_Enolase-phosphatase_Li"/>
    <property type="match status" value="1"/>
</dbReference>
<dbReference type="SFLD" id="SFLDS00003">
    <property type="entry name" value="Haloacid_Dehalogenase"/>
    <property type="match status" value="1"/>
</dbReference>
<dbReference type="SUPFAM" id="SSF56784">
    <property type="entry name" value="HAD-like"/>
    <property type="match status" value="1"/>
</dbReference>
<comment type="function">
    <text evidence="1">Bifunctional enzyme that catalyzes the enolization of 2,3-diketo-5-methylthiopentyl-1-phosphate (DK-MTP-1-P) into the intermediate 2-hydroxy-3-keto-5-methylthiopentenyl-1-phosphate (HK-MTPenyl-1-P), which is then dephosphorylated to form the acireductone 1,2-dihydroxy-3-keto-5-methylthiopentene (DHK-MTPene).</text>
</comment>
<comment type="catalytic activity">
    <reaction evidence="1">
        <text>5-methylsulfanyl-2,3-dioxopentyl phosphate + H2O = 1,2-dihydroxy-5-(methylsulfanyl)pent-1-en-3-one + phosphate</text>
        <dbReference type="Rhea" id="RHEA:21700"/>
        <dbReference type="ChEBI" id="CHEBI:15377"/>
        <dbReference type="ChEBI" id="CHEBI:43474"/>
        <dbReference type="ChEBI" id="CHEBI:49252"/>
        <dbReference type="ChEBI" id="CHEBI:58828"/>
        <dbReference type="EC" id="3.1.3.77"/>
    </reaction>
</comment>
<comment type="cofactor">
    <cofactor evidence="1">
        <name>Mg(2+)</name>
        <dbReference type="ChEBI" id="CHEBI:18420"/>
    </cofactor>
    <text evidence="1">Binds 1 Mg(2+) ion per subunit.</text>
</comment>
<comment type="pathway">
    <text evidence="1">Amino-acid biosynthesis; L-methionine biosynthesis via salvage pathway; L-methionine from S-methyl-5-thio-alpha-D-ribose 1-phosphate: step 3/6.</text>
</comment>
<comment type="pathway">
    <text evidence="1">Amino-acid biosynthesis; L-methionine biosynthesis via salvage pathway; L-methionine from S-methyl-5-thio-alpha-D-ribose 1-phosphate: step 4/6.</text>
</comment>
<comment type="subunit">
    <text evidence="1">Monomer.</text>
</comment>
<comment type="subcellular location">
    <subcellularLocation>
        <location evidence="1">Cytoplasm</location>
    </subcellularLocation>
    <subcellularLocation>
        <location evidence="1">Nucleus</location>
    </subcellularLocation>
</comment>
<comment type="similarity">
    <text evidence="1">Belongs to the HAD-like hydrolase superfamily. MasA/MtnC family.</text>
</comment>
<evidence type="ECO:0000255" key="1">
    <source>
        <dbReference type="HAMAP-Rule" id="MF_03117"/>
    </source>
</evidence>
<gene>
    <name evidence="1" type="primary">UTR4</name>
    <name type="ORF">VDBG_08645</name>
</gene>
<keyword id="KW-0028">Amino-acid biosynthesis</keyword>
<keyword id="KW-0963">Cytoplasm</keyword>
<keyword id="KW-0378">Hydrolase</keyword>
<keyword id="KW-0460">Magnesium</keyword>
<keyword id="KW-0479">Metal-binding</keyword>
<keyword id="KW-0486">Methionine biosynthesis</keyword>
<keyword id="KW-0539">Nucleus</keyword>
<keyword id="KW-1185">Reference proteome</keyword>
<sequence>MASATATTSAADLAAVKVVLLDIEGTVCPISFVKDVLFPYALQALPVTLDKKWDSPDFAPYRNAFPEPAASSRPVFEAHVADLVKRDVKVSYLKALQGYLWLAGYESGDIKAPLFPDVSPSMRAWHDAGIKLIIYSSGSVPAQKLLFGHTNASPPSLIPIISDWFDTVNAGMKMESSSYTSILSRYPDTQPQEWLFLSDNVDEVSAARAAGMHSLVVVRPGNAPLPECHVGEGQAVQTFEGLAVGGKRNESSKSS</sequence>
<feature type="chain" id="PRO_0000394015" description="Enolase-phosphatase E1">
    <location>
        <begin position="1"/>
        <end position="255"/>
    </location>
</feature>
<feature type="binding site" evidence="1">
    <location>
        <position position="22"/>
    </location>
    <ligand>
        <name>Mg(2+)</name>
        <dbReference type="ChEBI" id="CHEBI:18420"/>
    </ligand>
</feature>
<feature type="binding site" evidence="1">
    <location>
        <position position="24"/>
    </location>
    <ligand>
        <name>Mg(2+)</name>
        <dbReference type="ChEBI" id="CHEBI:18420"/>
    </ligand>
</feature>
<feature type="binding site" evidence="1">
    <location>
        <begin position="136"/>
        <end position="137"/>
    </location>
    <ligand>
        <name>substrate</name>
    </ligand>
</feature>
<feature type="binding site" evidence="1">
    <location>
        <position position="173"/>
    </location>
    <ligand>
        <name>substrate</name>
    </ligand>
</feature>
<feature type="binding site" evidence="1">
    <location>
        <position position="199"/>
    </location>
    <ligand>
        <name>Mg(2+)</name>
        <dbReference type="ChEBI" id="CHEBI:18420"/>
    </ligand>
</feature>
<proteinExistence type="inferred from homology"/>
<organism>
    <name type="scientific">Verticillium alfalfae (strain VaMs.102 / ATCC MYA-4576 / FGSC 10136)</name>
    <name type="common">Verticillium wilt of alfalfa</name>
    <name type="synonym">Verticillium albo-atrum</name>
    <dbReference type="NCBI Taxonomy" id="526221"/>
    <lineage>
        <taxon>Eukaryota</taxon>
        <taxon>Fungi</taxon>
        <taxon>Dikarya</taxon>
        <taxon>Ascomycota</taxon>
        <taxon>Pezizomycotina</taxon>
        <taxon>Sordariomycetes</taxon>
        <taxon>Hypocreomycetidae</taxon>
        <taxon>Glomerellales</taxon>
        <taxon>Plectosphaerellaceae</taxon>
        <taxon>Verticillium</taxon>
    </lineage>
</organism>